<sequence>MATKLIKHGSKAREQMLEGIDILADAVKVTLGPKGRNVLIEQSFGSPKITKDGVTVAKSIALKDKIRNAGAQLLKSAATKAAEVAGDGTTTATVLARALAREGNKLVAAGYNPMDLKRGMDLAVNAVVEEIKKSSKKINSQEEIAQVGTISSNGDKEIGEKIAKAMEEVGKEGVITVEEAKNFSFDVEVVKGMMFDRGYLSPYFVTNSEKMVAELENPFILLFEKKLSNLQPMLPILEAVVQSQRPLLIIAEDVEGEALATLVVNRLRGGLKVAAVKAPGFGDRRKAMMEDIAILTKGELITEDLGMKLENVSIKSLGTAKRVTISKENTVIVDGNGDKKNIEDRVLQIKSQIAETTSDYDKEKLQERLAKLSGGVAVLKVGGATEVEVKERKDRVEDALAATRAAVEEGVVAGGGVTLLHASQPLTKLKVENKDQQAGIEIVIEALKDPLKQIVENAGENGGVVVGKLLEHKDKNYGFNAQDMQYVDMIKAGIIDPAKVVRTALQDAASVASLIITTETLIVDESSDKEEPMPMRGGMGGMGGMDF</sequence>
<keyword id="KW-0067">ATP-binding</keyword>
<keyword id="KW-0143">Chaperone</keyword>
<keyword id="KW-0963">Cytoplasm</keyword>
<keyword id="KW-0413">Isomerase</keyword>
<keyword id="KW-0547">Nucleotide-binding</keyword>
<name>CH60_RICM5</name>
<protein>
    <recommendedName>
        <fullName evidence="1">Chaperonin GroEL</fullName>
        <ecNumber evidence="1">5.6.1.7</ecNumber>
    </recommendedName>
    <alternativeName>
        <fullName evidence="1">60 kDa chaperonin</fullName>
    </alternativeName>
    <alternativeName>
        <fullName evidence="1">Chaperonin-60</fullName>
        <shortName evidence="1">Cpn60</shortName>
    </alternativeName>
</protein>
<evidence type="ECO:0000255" key="1">
    <source>
        <dbReference type="HAMAP-Rule" id="MF_00600"/>
    </source>
</evidence>
<evidence type="ECO:0000256" key="2">
    <source>
        <dbReference type="SAM" id="MobiDB-lite"/>
    </source>
</evidence>
<evidence type="ECO:0000305" key="3"/>
<organism>
    <name type="scientific">Rickettsia massiliae (strain Mtu5)</name>
    <dbReference type="NCBI Taxonomy" id="416276"/>
    <lineage>
        <taxon>Bacteria</taxon>
        <taxon>Pseudomonadati</taxon>
        <taxon>Pseudomonadota</taxon>
        <taxon>Alphaproteobacteria</taxon>
        <taxon>Rickettsiales</taxon>
        <taxon>Rickettsiaceae</taxon>
        <taxon>Rickettsieae</taxon>
        <taxon>Rickettsia</taxon>
        <taxon>spotted fever group</taxon>
    </lineage>
</organism>
<comment type="function">
    <text evidence="1">Together with its co-chaperonin GroES, plays an essential role in assisting protein folding. The GroEL-GroES system forms a nano-cage that allows encapsulation of the non-native substrate proteins and provides a physical environment optimized to promote and accelerate protein folding.</text>
</comment>
<comment type="catalytic activity">
    <reaction evidence="1">
        <text>ATP + H2O + a folded polypeptide = ADP + phosphate + an unfolded polypeptide.</text>
        <dbReference type="EC" id="5.6.1.7"/>
    </reaction>
</comment>
<comment type="subunit">
    <text evidence="1">Forms a cylinder of 14 subunits composed of two heptameric rings stacked back-to-back. Interacts with the co-chaperonin GroES.</text>
</comment>
<comment type="subcellular location">
    <subcellularLocation>
        <location evidence="1">Cytoplasm</location>
    </subcellularLocation>
</comment>
<comment type="similarity">
    <text evidence="1">Belongs to the chaperonin (HSP60) family.</text>
</comment>
<comment type="sequence caution" evidence="3">
    <conflict type="erroneous initiation">
        <sequence resource="EMBL-CDS" id="ABV85051"/>
    </conflict>
</comment>
<feature type="chain" id="PRO_0000332063" description="Chaperonin GroEL">
    <location>
        <begin position="1"/>
        <end position="547"/>
    </location>
</feature>
<feature type="region of interest" description="Disordered" evidence="2">
    <location>
        <begin position="527"/>
        <end position="547"/>
    </location>
</feature>
<feature type="compositionally biased region" description="Gly residues" evidence="2">
    <location>
        <begin position="537"/>
        <end position="547"/>
    </location>
</feature>
<feature type="binding site" evidence="1">
    <location>
        <begin position="30"/>
        <end position="33"/>
    </location>
    <ligand>
        <name>ATP</name>
        <dbReference type="ChEBI" id="CHEBI:30616"/>
    </ligand>
</feature>
<feature type="binding site" evidence="1">
    <location>
        <position position="51"/>
    </location>
    <ligand>
        <name>ATP</name>
        <dbReference type="ChEBI" id="CHEBI:30616"/>
    </ligand>
</feature>
<feature type="binding site" evidence="1">
    <location>
        <begin position="87"/>
        <end position="91"/>
    </location>
    <ligand>
        <name>ATP</name>
        <dbReference type="ChEBI" id="CHEBI:30616"/>
    </ligand>
</feature>
<feature type="binding site" evidence="1">
    <location>
        <position position="415"/>
    </location>
    <ligand>
        <name>ATP</name>
        <dbReference type="ChEBI" id="CHEBI:30616"/>
    </ligand>
</feature>
<feature type="binding site" evidence="1">
    <location>
        <position position="496"/>
    </location>
    <ligand>
        <name>ATP</name>
        <dbReference type="ChEBI" id="CHEBI:30616"/>
    </ligand>
</feature>
<proteinExistence type="inferred from homology"/>
<accession>A8F2B5</accession>
<reference key="1">
    <citation type="journal article" date="2007" name="Genome Res.">
        <title>Lateral gene transfer between obligate intracellular bacteria: evidence from the Rickettsia massiliae genome.</title>
        <authorList>
            <person name="Blanc G."/>
            <person name="Ogata H."/>
            <person name="Robert C."/>
            <person name="Audic S."/>
            <person name="Claverie J.-M."/>
            <person name="Raoult D."/>
        </authorList>
    </citation>
    <scope>NUCLEOTIDE SEQUENCE [LARGE SCALE GENOMIC DNA]</scope>
    <source>
        <strain>Mtu5</strain>
    </source>
</reference>
<gene>
    <name evidence="1" type="primary">groEL</name>
    <name evidence="1" type="synonym">groL</name>
    <name type="ordered locus">RMA_0997</name>
</gene>
<dbReference type="EC" id="5.6.1.7" evidence="1"/>
<dbReference type="EMBL" id="CP000683">
    <property type="protein sequence ID" value="ABV85051.1"/>
    <property type="status" value="ALT_INIT"/>
    <property type="molecule type" value="Genomic_DNA"/>
</dbReference>
<dbReference type="RefSeq" id="WP_041404810.1">
    <property type="nucleotide sequence ID" value="NC_009900.1"/>
</dbReference>
<dbReference type="SMR" id="A8F2B5"/>
<dbReference type="KEGG" id="rms:RMA_0997"/>
<dbReference type="HOGENOM" id="CLU_016503_3_0_5"/>
<dbReference type="Proteomes" id="UP000001311">
    <property type="component" value="Chromosome"/>
</dbReference>
<dbReference type="GO" id="GO:0005737">
    <property type="term" value="C:cytoplasm"/>
    <property type="evidence" value="ECO:0007669"/>
    <property type="project" value="UniProtKB-SubCell"/>
</dbReference>
<dbReference type="GO" id="GO:0005524">
    <property type="term" value="F:ATP binding"/>
    <property type="evidence" value="ECO:0007669"/>
    <property type="project" value="UniProtKB-UniRule"/>
</dbReference>
<dbReference type="GO" id="GO:0140662">
    <property type="term" value="F:ATP-dependent protein folding chaperone"/>
    <property type="evidence" value="ECO:0007669"/>
    <property type="project" value="InterPro"/>
</dbReference>
<dbReference type="GO" id="GO:0016853">
    <property type="term" value="F:isomerase activity"/>
    <property type="evidence" value="ECO:0007669"/>
    <property type="project" value="UniProtKB-KW"/>
</dbReference>
<dbReference type="GO" id="GO:0051082">
    <property type="term" value="F:unfolded protein binding"/>
    <property type="evidence" value="ECO:0007669"/>
    <property type="project" value="UniProtKB-UniRule"/>
</dbReference>
<dbReference type="GO" id="GO:0042026">
    <property type="term" value="P:protein refolding"/>
    <property type="evidence" value="ECO:0007669"/>
    <property type="project" value="UniProtKB-UniRule"/>
</dbReference>
<dbReference type="CDD" id="cd03344">
    <property type="entry name" value="GroEL"/>
    <property type="match status" value="1"/>
</dbReference>
<dbReference type="FunFam" id="3.50.7.10:FF:000001">
    <property type="entry name" value="60 kDa chaperonin"/>
    <property type="match status" value="1"/>
</dbReference>
<dbReference type="Gene3D" id="3.50.7.10">
    <property type="entry name" value="GroEL"/>
    <property type="match status" value="1"/>
</dbReference>
<dbReference type="Gene3D" id="1.10.560.10">
    <property type="entry name" value="GroEL-like equatorial domain"/>
    <property type="match status" value="1"/>
</dbReference>
<dbReference type="Gene3D" id="3.30.260.10">
    <property type="entry name" value="TCP-1-like chaperonin intermediate domain"/>
    <property type="match status" value="1"/>
</dbReference>
<dbReference type="HAMAP" id="MF_00600">
    <property type="entry name" value="CH60"/>
    <property type="match status" value="1"/>
</dbReference>
<dbReference type="InterPro" id="IPR018370">
    <property type="entry name" value="Chaperonin_Cpn60_CS"/>
</dbReference>
<dbReference type="InterPro" id="IPR001844">
    <property type="entry name" value="Cpn60/GroEL"/>
</dbReference>
<dbReference type="InterPro" id="IPR002423">
    <property type="entry name" value="Cpn60/GroEL/TCP-1"/>
</dbReference>
<dbReference type="InterPro" id="IPR027409">
    <property type="entry name" value="GroEL-like_apical_dom_sf"/>
</dbReference>
<dbReference type="InterPro" id="IPR027413">
    <property type="entry name" value="GROEL-like_equatorial_sf"/>
</dbReference>
<dbReference type="InterPro" id="IPR027410">
    <property type="entry name" value="TCP-1-like_intermed_sf"/>
</dbReference>
<dbReference type="NCBIfam" id="TIGR02348">
    <property type="entry name" value="GroEL"/>
    <property type="match status" value="1"/>
</dbReference>
<dbReference type="NCBIfam" id="NF000592">
    <property type="entry name" value="PRK00013.1"/>
    <property type="match status" value="1"/>
</dbReference>
<dbReference type="NCBIfam" id="NF009487">
    <property type="entry name" value="PRK12849.1"/>
    <property type="match status" value="1"/>
</dbReference>
<dbReference type="NCBIfam" id="NF009488">
    <property type="entry name" value="PRK12850.1"/>
    <property type="match status" value="1"/>
</dbReference>
<dbReference type="NCBIfam" id="NF009489">
    <property type="entry name" value="PRK12851.1"/>
    <property type="match status" value="1"/>
</dbReference>
<dbReference type="PANTHER" id="PTHR45633">
    <property type="entry name" value="60 KDA HEAT SHOCK PROTEIN, MITOCHONDRIAL"/>
    <property type="match status" value="1"/>
</dbReference>
<dbReference type="Pfam" id="PF00118">
    <property type="entry name" value="Cpn60_TCP1"/>
    <property type="match status" value="1"/>
</dbReference>
<dbReference type="PRINTS" id="PR00298">
    <property type="entry name" value="CHAPERONIN60"/>
</dbReference>
<dbReference type="SUPFAM" id="SSF52029">
    <property type="entry name" value="GroEL apical domain-like"/>
    <property type="match status" value="1"/>
</dbReference>
<dbReference type="SUPFAM" id="SSF48592">
    <property type="entry name" value="GroEL equatorial domain-like"/>
    <property type="match status" value="1"/>
</dbReference>
<dbReference type="SUPFAM" id="SSF54849">
    <property type="entry name" value="GroEL-intermediate domain like"/>
    <property type="match status" value="1"/>
</dbReference>
<dbReference type="PROSITE" id="PS00296">
    <property type="entry name" value="CHAPERONINS_CPN60"/>
    <property type="match status" value="1"/>
</dbReference>